<dbReference type="EC" id="4.99.1.9" evidence="1"/>
<dbReference type="EMBL" id="AP006840">
    <property type="protein sequence ID" value="BAD39145.1"/>
    <property type="molecule type" value="Genomic_DNA"/>
</dbReference>
<dbReference type="RefSeq" id="WP_011194295.1">
    <property type="nucleotide sequence ID" value="NC_006177.1"/>
</dbReference>
<dbReference type="SMR" id="Q67T48"/>
<dbReference type="STRING" id="292459.STH160"/>
<dbReference type="KEGG" id="sth:STH160"/>
<dbReference type="eggNOG" id="COG0276">
    <property type="taxonomic scope" value="Bacteria"/>
</dbReference>
<dbReference type="HOGENOM" id="CLU_018884_0_0_9"/>
<dbReference type="OrthoDB" id="9776380at2"/>
<dbReference type="UniPathway" id="UPA00252"/>
<dbReference type="Proteomes" id="UP000000417">
    <property type="component" value="Chromosome"/>
</dbReference>
<dbReference type="GO" id="GO:0005737">
    <property type="term" value="C:cytoplasm"/>
    <property type="evidence" value="ECO:0007669"/>
    <property type="project" value="UniProtKB-SubCell"/>
</dbReference>
<dbReference type="GO" id="GO:0004325">
    <property type="term" value="F:ferrochelatase activity"/>
    <property type="evidence" value="ECO:0007669"/>
    <property type="project" value="UniProtKB-UniRule"/>
</dbReference>
<dbReference type="GO" id="GO:0046872">
    <property type="term" value="F:metal ion binding"/>
    <property type="evidence" value="ECO:0007669"/>
    <property type="project" value="UniProtKB-KW"/>
</dbReference>
<dbReference type="GO" id="GO:0006783">
    <property type="term" value="P:heme biosynthetic process"/>
    <property type="evidence" value="ECO:0007669"/>
    <property type="project" value="UniProtKB-UniRule"/>
</dbReference>
<dbReference type="CDD" id="cd00419">
    <property type="entry name" value="Ferrochelatase_C"/>
    <property type="match status" value="1"/>
</dbReference>
<dbReference type="CDD" id="cd03411">
    <property type="entry name" value="Ferrochelatase_N"/>
    <property type="match status" value="1"/>
</dbReference>
<dbReference type="FunFam" id="3.40.50.1400:FF:000002">
    <property type="entry name" value="Ferrochelatase"/>
    <property type="match status" value="1"/>
</dbReference>
<dbReference type="Gene3D" id="3.40.50.1400">
    <property type="match status" value="2"/>
</dbReference>
<dbReference type="HAMAP" id="MF_00323">
    <property type="entry name" value="Ferrochelatase"/>
    <property type="match status" value="1"/>
</dbReference>
<dbReference type="InterPro" id="IPR001015">
    <property type="entry name" value="Ferrochelatase"/>
</dbReference>
<dbReference type="InterPro" id="IPR019772">
    <property type="entry name" value="Ferrochelatase_AS"/>
</dbReference>
<dbReference type="InterPro" id="IPR033644">
    <property type="entry name" value="Ferrochelatase_C"/>
</dbReference>
<dbReference type="InterPro" id="IPR033659">
    <property type="entry name" value="Ferrochelatase_N"/>
</dbReference>
<dbReference type="NCBIfam" id="TIGR00109">
    <property type="entry name" value="hemH"/>
    <property type="match status" value="1"/>
</dbReference>
<dbReference type="PANTHER" id="PTHR11108">
    <property type="entry name" value="FERROCHELATASE"/>
    <property type="match status" value="1"/>
</dbReference>
<dbReference type="PANTHER" id="PTHR11108:SF1">
    <property type="entry name" value="FERROCHELATASE, MITOCHONDRIAL"/>
    <property type="match status" value="1"/>
</dbReference>
<dbReference type="Pfam" id="PF00762">
    <property type="entry name" value="Ferrochelatase"/>
    <property type="match status" value="1"/>
</dbReference>
<dbReference type="SUPFAM" id="SSF53800">
    <property type="entry name" value="Chelatase"/>
    <property type="match status" value="1"/>
</dbReference>
<dbReference type="PROSITE" id="PS00534">
    <property type="entry name" value="FERROCHELATASE"/>
    <property type="match status" value="1"/>
</dbReference>
<accession>Q67T48</accession>
<organism>
    <name type="scientific">Symbiobacterium thermophilum (strain DSM 24528 / JCM 14929 / IAM 14863 / T)</name>
    <dbReference type="NCBI Taxonomy" id="292459"/>
    <lineage>
        <taxon>Bacteria</taxon>
        <taxon>Bacillati</taxon>
        <taxon>Bacillota</taxon>
        <taxon>Clostridia</taxon>
        <taxon>Eubacteriales</taxon>
        <taxon>Symbiobacteriaceae</taxon>
        <taxon>Symbiobacterium</taxon>
    </lineage>
</organism>
<protein>
    <recommendedName>
        <fullName evidence="1">Coproporphyrin III ferrochelatase</fullName>
        <ecNumber evidence="1">4.99.1.9</ecNumber>
    </recommendedName>
</protein>
<sequence>MEKTAVLLVNLGTPSAPEPDAVRPYLAEFLGDWWVIDKPRWQWLPILHGIILRVRPPRVAKIYQKIWLPEGSPLLHYSRLQQAALQQRLEPEGIRVALGMTYGQPSVKSALEELRGWGVRRLLVLPLFPQYSSTTTAAVWSKVQKALDGWRDLPEQIFIRDFPTHPKYLAFLTERISGYIAEKGRPDALVLSYHSIPQAYTASGDDYAAQCESTTDAVRDRFPDLKIVMGYQSKFGNDPWLEPATDEVLRELVRTGHRHVAVMAPGFAADCIETLHELEVEYAEEFVKAGGERYDYLPAANDHPLFIDCLEDLVRRHLPR</sequence>
<comment type="function">
    <text evidence="1">Involved in coproporphyrin-dependent heme b biosynthesis. Catalyzes the insertion of ferrous iron into coproporphyrin III to form Fe-coproporphyrin III.</text>
</comment>
<comment type="catalytic activity">
    <reaction evidence="1">
        <text>Fe-coproporphyrin III + 2 H(+) = coproporphyrin III + Fe(2+)</text>
        <dbReference type="Rhea" id="RHEA:49572"/>
        <dbReference type="ChEBI" id="CHEBI:15378"/>
        <dbReference type="ChEBI" id="CHEBI:29033"/>
        <dbReference type="ChEBI" id="CHEBI:68438"/>
        <dbReference type="ChEBI" id="CHEBI:131725"/>
        <dbReference type="EC" id="4.99.1.9"/>
    </reaction>
    <physiologicalReaction direction="right-to-left" evidence="1">
        <dbReference type="Rhea" id="RHEA:49574"/>
    </physiologicalReaction>
</comment>
<comment type="pathway">
    <text evidence="1">Porphyrin-containing compound metabolism; protoheme biosynthesis.</text>
</comment>
<comment type="subcellular location">
    <subcellularLocation>
        <location evidence="1">Cytoplasm</location>
    </subcellularLocation>
</comment>
<comment type="similarity">
    <text evidence="1">Belongs to the ferrochelatase family.</text>
</comment>
<gene>
    <name evidence="1" type="primary">cpfC</name>
    <name type="ordered locus">STH160</name>
</gene>
<feature type="chain" id="PRO_0000175214" description="Coproporphyrin III ferrochelatase">
    <location>
        <begin position="1"/>
        <end position="320"/>
    </location>
</feature>
<feature type="binding site" evidence="1">
    <location>
        <position position="194"/>
    </location>
    <ligand>
        <name>Fe(2+)</name>
        <dbReference type="ChEBI" id="CHEBI:29033"/>
    </ligand>
</feature>
<feature type="binding site" evidence="1">
    <location>
        <position position="273"/>
    </location>
    <ligand>
        <name>Fe(2+)</name>
        <dbReference type="ChEBI" id="CHEBI:29033"/>
    </ligand>
</feature>
<keyword id="KW-0963">Cytoplasm</keyword>
<keyword id="KW-0350">Heme biosynthesis</keyword>
<keyword id="KW-0408">Iron</keyword>
<keyword id="KW-0456">Lyase</keyword>
<keyword id="KW-0479">Metal-binding</keyword>
<keyword id="KW-0627">Porphyrin biosynthesis</keyword>
<keyword id="KW-1185">Reference proteome</keyword>
<evidence type="ECO:0000255" key="1">
    <source>
        <dbReference type="HAMAP-Rule" id="MF_00323"/>
    </source>
</evidence>
<reference key="1">
    <citation type="journal article" date="2004" name="Nucleic Acids Res.">
        <title>Genome sequence of Symbiobacterium thermophilum, an uncultivable bacterium that depends on microbial commensalism.</title>
        <authorList>
            <person name="Ueda K."/>
            <person name="Yamashita A."/>
            <person name="Ishikawa J."/>
            <person name="Shimada M."/>
            <person name="Watsuji T."/>
            <person name="Morimura K."/>
            <person name="Ikeda H."/>
            <person name="Hattori M."/>
            <person name="Beppu T."/>
        </authorList>
    </citation>
    <scope>NUCLEOTIDE SEQUENCE [LARGE SCALE GENOMIC DNA]</scope>
    <source>
        <strain>DSM 24528 / JCM 14929 / IAM 14863 / T</strain>
    </source>
</reference>
<name>CPFC_SYMTH</name>
<proteinExistence type="inferred from homology"/>